<accession>P0AG84</accession>
<accession>P25887</accession>
<accession>Q2M9J4</accession>
<accession>Q46852</accession>
<reference key="1">
    <citation type="journal article" date="1997" name="Science">
        <title>The complete genome sequence of Escherichia coli K-12.</title>
        <authorList>
            <person name="Blattner F.R."/>
            <person name="Plunkett G. III"/>
            <person name="Bloch C.A."/>
            <person name="Perna N.T."/>
            <person name="Burland V."/>
            <person name="Riley M."/>
            <person name="Collado-Vides J."/>
            <person name="Glasner J.D."/>
            <person name="Rode C.K."/>
            <person name="Mayhew G.F."/>
            <person name="Gregor J."/>
            <person name="Davis N.W."/>
            <person name="Kirkpatrick H.A."/>
            <person name="Goeden M.A."/>
            <person name="Rose D.J."/>
            <person name="Mau B."/>
            <person name="Shao Y."/>
        </authorList>
    </citation>
    <scope>NUCLEOTIDE SEQUENCE [LARGE SCALE GENOMIC DNA]</scope>
    <source>
        <strain>K12 / MG1655 / ATCC 47076</strain>
    </source>
</reference>
<reference key="2">
    <citation type="journal article" date="2006" name="Mol. Syst. Biol.">
        <title>Highly accurate genome sequences of Escherichia coli K-12 strains MG1655 and W3110.</title>
        <authorList>
            <person name="Hayashi K."/>
            <person name="Morooka N."/>
            <person name="Yamamoto Y."/>
            <person name="Fujita K."/>
            <person name="Isono K."/>
            <person name="Choi S."/>
            <person name="Ohtsubo E."/>
            <person name="Baba T."/>
            <person name="Wanner B.L."/>
            <person name="Mori H."/>
            <person name="Horiuchi T."/>
        </authorList>
    </citation>
    <scope>NUCLEOTIDE SEQUENCE [LARGE SCALE GENOMIC DNA]</scope>
    <source>
        <strain>K12 / W3110 / ATCC 27325 / DSM 5911</strain>
    </source>
</reference>
<reference key="3">
    <citation type="journal article" date="1989" name="J. Bacteriol.">
        <title>Import of biopolymers into Escherichia coli: nucleotide sequences of the exbB and exbD genes are homologous to those of the tolQ and tolR genes, respectively.</title>
        <authorList>
            <person name="Eick-Helmerich K."/>
            <person name="Braun V."/>
        </authorList>
    </citation>
    <scope>NUCLEOTIDE SEQUENCE [GENOMIC DNA] OF 247-294</scope>
    <source>
        <strain>K12</strain>
    </source>
</reference>
<reference key="4">
    <citation type="journal article" date="2009" name="Mol. Cell. Proteomics">
        <title>Lysine acetylation is a highly abundant and evolutionarily conserved modification in Escherichia coli.</title>
        <authorList>
            <person name="Zhang J."/>
            <person name="Sprung R."/>
            <person name="Pei J."/>
            <person name="Tan X."/>
            <person name="Kim S."/>
            <person name="Zhu H."/>
            <person name="Liu C.F."/>
            <person name="Grishin N.V."/>
            <person name="Zhao Y."/>
        </authorList>
    </citation>
    <scope>ACETYLATION [LARGE SCALE ANALYSIS] AT LYS-39</scope>
    <scope>IDENTIFICATION BY MASS SPECTROMETRY</scope>
    <source>
        <strain>K12 / JW1106</strain>
        <strain>K12 / MG1655 / ATCC 47076</strain>
    </source>
</reference>
<organism>
    <name type="scientific">Escherichia coli (strain K12)</name>
    <dbReference type="NCBI Taxonomy" id="83333"/>
    <lineage>
        <taxon>Bacteria</taxon>
        <taxon>Pseudomonadati</taxon>
        <taxon>Pseudomonadota</taxon>
        <taxon>Gammaproteobacteria</taxon>
        <taxon>Enterobacterales</taxon>
        <taxon>Enterobacteriaceae</taxon>
        <taxon>Escherichia</taxon>
    </lineage>
</organism>
<feature type="chain" id="PRO_0000054837" description="Uncharacterized oxidoreductase YghA">
    <location>
        <begin position="1"/>
        <end position="294"/>
    </location>
</feature>
<feature type="region of interest" description="Disordered" evidence="3">
    <location>
        <begin position="1"/>
        <end position="32"/>
    </location>
</feature>
<feature type="active site" description="Proton acceptor" evidence="2">
    <location>
        <position position="199"/>
    </location>
</feature>
<feature type="binding site" evidence="1">
    <location>
        <begin position="53"/>
        <end position="77"/>
    </location>
    <ligand>
        <name>NADP(+)</name>
        <dbReference type="ChEBI" id="CHEBI:58349"/>
    </ligand>
</feature>
<feature type="binding site" evidence="1">
    <location>
        <position position="186"/>
    </location>
    <ligand>
        <name>substrate</name>
    </ligand>
</feature>
<feature type="modified residue" description="N6-acetyllysine" evidence="4">
    <location>
        <position position="39"/>
    </location>
</feature>
<comment type="similarity">
    <text evidence="5">Belongs to the short-chain dehydrogenases/reductases (SDR) family.</text>
</comment>
<dbReference type="EC" id="1.-.-.-"/>
<dbReference type="EMBL" id="U28377">
    <property type="protein sequence ID" value="AAA69170.1"/>
    <property type="molecule type" value="Genomic_DNA"/>
</dbReference>
<dbReference type="EMBL" id="U00096">
    <property type="protein sequence ID" value="AAC76039.1"/>
    <property type="molecule type" value="Genomic_DNA"/>
</dbReference>
<dbReference type="EMBL" id="AP009048">
    <property type="protein sequence ID" value="BAE77062.1"/>
    <property type="molecule type" value="Genomic_DNA"/>
</dbReference>
<dbReference type="EMBL" id="M28819">
    <property type="status" value="NOT_ANNOTATED_CDS"/>
    <property type="molecule type" value="Genomic_DNA"/>
</dbReference>
<dbReference type="PIR" id="A65087">
    <property type="entry name" value="A65087"/>
</dbReference>
<dbReference type="RefSeq" id="NP_417476.1">
    <property type="nucleotide sequence ID" value="NC_000913.3"/>
</dbReference>
<dbReference type="RefSeq" id="WP_000018760.1">
    <property type="nucleotide sequence ID" value="NZ_STEB01000001.1"/>
</dbReference>
<dbReference type="SMR" id="P0AG84"/>
<dbReference type="BioGRID" id="4261414">
    <property type="interactions" value="28"/>
</dbReference>
<dbReference type="DIP" id="DIP-36027N"/>
<dbReference type="FunCoup" id="P0AG84">
    <property type="interactions" value="202"/>
</dbReference>
<dbReference type="IntAct" id="P0AG84">
    <property type="interactions" value="6"/>
</dbReference>
<dbReference type="STRING" id="511145.b3003"/>
<dbReference type="iPTMnet" id="P0AG84"/>
<dbReference type="jPOST" id="P0AG84"/>
<dbReference type="PaxDb" id="511145-b3003"/>
<dbReference type="EnsemblBacteria" id="AAC76039">
    <property type="protein sequence ID" value="AAC76039"/>
    <property type="gene ID" value="b3003"/>
</dbReference>
<dbReference type="GeneID" id="75173135"/>
<dbReference type="GeneID" id="947478"/>
<dbReference type="KEGG" id="ecj:JW2972"/>
<dbReference type="KEGG" id="eco:b3003"/>
<dbReference type="KEGG" id="ecoc:C3026_16420"/>
<dbReference type="PATRIC" id="fig|1411691.4.peg.3725"/>
<dbReference type="EchoBASE" id="EB1269"/>
<dbReference type="eggNOG" id="COG1028">
    <property type="taxonomic scope" value="Bacteria"/>
</dbReference>
<dbReference type="HOGENOM" id="CLU_010194_4_0_6"/>
<dbReference type="InParanoid" id="P0AG84"/>
<dbReference type="OMA" id="AAYQMSQ"/>
<dbReference type="OrthoDB" id="9809287at2"/>
<dbReference type="PhylomeDB" id="P0AG84"/>
<dbReference type="BioCyc" id="EcoCyc:EG11292-MONOMER"/>
<dbReference type="BioCyc" id="MetaCyc:EG11292-MONOMER"/>
<dbReference type="PRO" id="PR:P0AG84"/>
<dbReference type="Proteomes" id="UP000000625">
    <property type="component" value="Chromosome"/>
</dbReference>
<dbReference type="GO" id="GO:0008106">
    <property type="term" value="F:alcohol dehydrogenase (NADP+) activity"/>
    <property type="evidence" value="ECO:0000314"/>
    <property type="project" value="EcoCyc"/>
</dbReference>
<dbReference type="GO" id="GO:0016616">
    <property type="term" value="F:oxidoreductase activity, acting on the CH-OH group of donors, NAD or NADP as acceptor"/>
    <property type="evidence" value="ECO:0000318"/>
    <property type="project" value="GO_Central"/>
</dbReference>
<dbReference type="CDD" id="cd05355">
    <property type="entry name" value="SDR_c1"/>
    <property type="match status" value="1"/>
</dbReference>
<dbReference type="FunFam" id="3.40.50.720:FF:000097">
    <property type="entry name" value="SDR family oxidoreductase"/>
    <property type="match status" value="1"/>
</dbReference>
<dbReference type="Gene3D" id="3.40.50.720">
    <property type="entry name" value="NAD(P)-binding Rossmann-like Domain"/>
    <property type="match status" value="1"/>
</dbReference>
<dbReference type="InterPro" id="IPR036291">
    <property type="entry name" value="NAD(P)-bd_dom_sf"/>
</dbReference>
<dbReference type="InterPro" id="IPR020904">
    <property type="entry name" value="Sc_DH/Rdtase_CS"/>
</dbReference>
<dbReference type="InterPro" id="IPR002347">
    <property type="entry name" value="SDR_fam"/>
</dbReference>
<dbReference type="NCBIfam" id="NF005939">
    <property type="entry name" value="PRK07985.1"/>
    <property type="match status" value="1"/>
</dbReference>
<dbReference type="PANTHER" id="PTHR48107:SF16">
    <property type="entry name" value="NADPH-DEPENDENT ALDEHYDE REDUCTASE 1, CHLOROPLASTIC"/>
    <property type="match status" value="1"/>
</dbReference>
<dbReference type="PANTHER" id="PTHR48107">
    <property type="entry name" value="NADPH-DEPENDENT ALDEHYDE REDUCTASE-LIKE PROTEIN, CHLOROPLASTIC-RELATED"/>
    <property type="match status" value="1"/>
</dbReference>
<dbReference type="Pfam" id="PF13561">
    <property type="entry name" value="adh_short_C2"/>
    <property type="match status" value="1"/>
</dbReference>
<dbReference type="PRINTS" id="PR00081">
    <property type="entry name" value="GDHRDH"/>
</dbReference>
<dbReference type="PRINTS" id="PR00080">
    <property type="entry name" value="SDRFAMILY"/>
</dbReference>
<dbReference type="SUPFAM" id="SSF51735">
    <property type="entry name" value="NAD(P)-binding Rossmann-fold domains"/>
    <property type="match status" value="1"/>
</dbReference>
<dbReference type="PROSITE" id="PS00061">
    <property type="entry name" value="ADH_SHORT"/>
    <property type="match status" value="1"/>
</dbReference>
<name>YGHA_ECOLI</name>
<protein>
    <recommendedName>
        <fullName>Uncharacterized oxidoreductase YghA</fullName>
        <ecNumber>1.-.-.-</ecNumber>
    </recommendedName>
</protein>
<sequence length="294" mass="31488">MSHLKDPTTQYYTGEYPKQKQPTPGIQAKMTPVPDCGEKTYVGSGRLKDRKALVTGGDSGIGRAAAIAYAREGADVAISYLPVEEEDAQDVKKIIEECGRKAVLLPGDLSDEKFARSLVHEAHKALGGLDIMALVAGKQVAIPDIADLTSEQFQKTFAINVFALFWLTQEAIPLLPKGASIITTSSIQAYQPSPHLLDYAATKAAILNYSRGLAKQVAEKGIRVNIVAPGPIWTALQISGGQTQDKIPQFGQQTPMKRAGQPAELAPVYVYLASQESSYVTAEVHGVCGGEHLG</sequence>
<gene>
    <name type="primary">yghA</name>
    <name type="ordered locus">b3003</name>
    <name type="ordered locus">JW2972</name>
</gene>
<evidence type="ECO:0000250" key="1"/>
<evidence type="ECO:0000255" key="2">
    <source>
        <dbReference type="PROSITE-ProRule" id="PRU10001"/>
    </source>
</evidence>
<evidence type="ECO:0000256" key="3">
    <source>
        <dbReference type="SAM" id="MobiDB-lite"/>
    </source>
</evidence>
<evidence type="ECO:0000269" key="4">
    <source>
    </source>
</evidence>
<evidence type="ECO:0000305" key="5"/>
<proteinExistence type="evidence at protein level"/>
<keyword id="KW-0007">Acetylation</keyword>
<keyword id="KW-0560">Oxidoreductase</keyword>
<keyword id="KW-1185">Reference proteome</keyword>